<sequence length="29" mass="3406">MIKVPLPDVIFVAHRNKHTRQGNITQTKY</sequence>
<dbReference type="EMBL" id="X71133">
    <property type="status" value="NOT_ANNOTATED_CDS"/>
    <property type="molecule type" value="Genomic_DNA"/>
</dbReference>
<dbReference type="EMBL" id="Z28100">
    <property type="status" value="NOT_ANNOTATED_CDS"/>
    <property type="molecule type" value="Genomic_DNA"/>
</dbReference>
<dbReference type="EMBL" id="BK006944">
    <property type="status" value="NOT_ANNOTATED_CDS"/>
    <property type="molecule type" value="Genomic_DNA"/>
</dbReference>
<dbReference type="STRING" id="4932.YKL100W-A"/>
<dbReference type="PaxDb" id="4932-YKL100W-A"/>
<dbReference type="EnsemblFungi" id="YKL100W-A_mRNA">
    <property type="protein sequence ID" value="YKL100W-A"/>
    <property type="gene ID" value="YKL100W-A"/>
</dbReference>
<dbReference type="AGR" id="SGD:S000028840"/>
<dbReference type="SGD" id="S000028840">
    <property type="gene designation" value="YKL100W-A"/>
</dbReference>
<dbReference type="HOGENOM" id="CLU_3410825_0_0_1"/>
<dbReference type="InParanoid" id="P0C5P2"/>
<dbReference type="PRO" id="PR:P0C5P2"/>
<dbReference type="Proteomes" id="UP000002311">
    <property type="component" value="Chromosome XI"/>
</dbReference>
<feature type="chain" id="PRO_0000309040" description="Uncharacterized protein YKL100W-A">
    <location>
        <begin position="1"/>
        <end position="29"/>
    </location>
</feature>
<accession>P0C5P2</accession>
<protein>
    <recommendedName>
        <fullName>Uncharacterized protein YKL100W-A</fullName>
    </recommendedName>
</protein>
<reference key="1">
    <citation type="journal article" date="1993" name="Yeast">
        <title>The DNA sequence analysis of the HAP4-LAP4 region on chromosome XI of Saccharomyces cerevisiae suggests the presence of a second aspartate aminotransferase gene in yeast.</title>
        <authorList>
            <person name="Cheret G."/>
            <person name="Pallier C."/>
            <person name="Valens M."/>
            <person name="Daignan-Fornier B."/>
            <person name="Fukuhara H."/>
            <person name="Bolotin-Fukuhara M."/>
            <person name="Sor F."/>
        </authorList>
    </citation>
    <scope>NUCLEOTIDE SEQUENCE [GENOMIC DNA]</scope>
    <source>
        <strain>ATCC 204508 / S288c</strain>
    </source>
</reference>
<reference key="2">
    <citation type="journal article" date="1994" name="Nature">
        <title>Complete DNA sequence of yeast chromosome XI.</title>
        <authorList>
            <person name="Dujon B."/>
            <person name="Alexandraki D."/>
            <person name="Andre B."/>
            <person name="Ansorge W."/>
            <person name="Baladron V."/>
            <person name="Ballesta J.P.G."/>
            <person name="Banrevi A."/>
            <person name="Bolle P.-A."/>
            <person name="Bolotin-Fukuhara M."/>
            <person name="Bossier P."/>
            <person name="Bou G."/>
            <person name="Boyer J."/>
            <person name="Buitrago M.J."/>
            <person name="Cheret G."/>
            <person name="Colleaux L."/>
            <person name="Daignan-Fornier B."/>
            <person name="del Rey F."/>
            <person name="Dion C."/>
            <person name="Domdey H."/>
            <person name="Duesterhoeft A."/>
            <person name="Duesterhus S."/>
            <person name="Entian K.-D."/>
            <person name="Erfle H."/>
            <person name="Esteban P.F."/>
            <person name="Feldmann H."/>
            <person name="Fernandes L."/>
            <person name="Fobo G.M."/>
            <person name="Fritz C."/>
            <person name="Fukuhara H."/>
            <person name="Gabel C."/>
            <person name="Gaillon L."/>
            <person name="Garcia-Cantalejo J.M."/>
            <person name="Garcia-Ramirez J.J."/>
            <person name="Gent M.E."/>
            <person name="Ghazvini M."/>
            <person name="Goffeau A."/>
            <person name="Gonzalez A."/>
            <person name="Grothues D."/>
            <person name="Guerreiro P."/>
            <person name="Hegemann J.H."/>
            <person name="Hewitt N."/>
            <person name="Hilger F."/>
            <person name="Hollenberg C.P."/>
            <person name="Horaitis O."/>
            <person name="Indge K.J."/>
            <person name="Jacquier A."/>
            <person name="James C.M."/>
            <person name="Jauniaux J.-C."/>
            <person name="Jimenez A."/>
            <person name="Keuchel H."/>
            <person name="Kirchrath L."/>
            <person name="Kleine K."/>
            <person name="Koetter P."/>
            <person name="Legrain P."/>
            <person name="Liebl S."/>
            <person name="Louis E.J."/>
            <person name="Maia e Silva A."/>
            <person name="Marck C."/>
            <person name="Monnier A.-L."/>
            <person name="Moestl D."/>
            <person name="Mueller S."/>
            <person name="Obermaier B."/>
            <person name="Oliver S.G."/>
            <person name="Pallier C."/>
            <person name="Pascolo S."/>
            <person name="Pfeiffer F."/>
            <person name="Philippsen P."/>
            <person name="Planta R.J."/>
            <person name="Pohl F.M."/>
            <person name="Pohl T.M."/>
            <person name="Poehlmann R."/>
            <person name="Portetelle D."/>
            <person name="Purnelle B."/>
            <person name="Puzos V."/>
            <person name="Ramezani Rad M."/>
            <person name="Rasmussen S.W."/>
            <person name="Remacha M.A."/>
            <person name="Revuelta J.L."/>
            <person name="Richard G.-F."/>
            <person name="Rieger M."/>
            <person name="Rodrigues-Pousada C."/>
            <person name="Rose M."/>
            <person name="Rupp T."/>
            <person name="Santos M.A."/>
            <person name="Schwager C."/>
            <person name="Sensen C."/>
            <person name="Skala J."/>
            <person name="Soares H."/>
            <person name="Sor F."/>
            <person name="Stegemann J."/>
            <person name="Tettelin H."/>
            <person name="Thierry A."/>
            <person name="Tzermia M."/>
            <person name="Urrestarazu L.A."/>
            <person name="van Dyck L."/>
            <person name="van Vliet-Reedijk J.C."/>
            <person name="Valens M."/>
            <person name="Vandenbol M."/>
            <person name="Vilela C."/>
            <person name="Vissers S."/>
            <person name="von Wettstein D."/>
            <person name="Voss H."/>
            <person name="Wiemann S."/>
            <person name="Xu G."/>
            <person name="Zimmermann J."/>
            <person name="Haasemann M."/>
            <person name="Becker I."/>
            <person name="Mewes H.-W."/>
        </authorList>
    </citation>
    <scope>NUCLEOTIDE SEQUENCE [LARGE SCALE GENOMIC DNA]</scope>
    <source>
        <strain>ATCC 204508 / S288c</strain>
    </source>
</reference>
<reference key="3">
    <citation type="journal article" date="2014" name="G3 (Bethesda)">
        <title>The reference genome sequence of Saccharomyces cerevisiae: Then and now.</title>
        <authorList>
            <person name="Engel S.R."/>
            <person name="Dietrich F.S."/>
            <person name="Fisk D.G."/>
            <person name="Binkley G."/>
            <person name="Balakrishnan R."/>
            <person name="Costanzo M.C."/>
            <person name="Dwight S.S."/>
            <person name="Hitz B.C."/>
            <person name="Karra K."/>
            <person name="Nash R.S."/>
            <person name="Weng S."/>
            <person name="Wong E.D."/>
            <person name="Lloyd P."/>
            <person name="Skrzypek M.S."/>
            <person name="Miyasato S.R."/>
            <person name="Simison M."/>
            <person name="Cherry J.M."/>
        </authorList>
    </citation>
    <scope>GENOME REANNOTATION</scope>
    <source>
        <strain>ATCC 204508 / S288c</strain>
    </source>
</reference>
<reference key="4">
    <citation type="journal article" date="2002" name="Genome Res.">
        <title>Parallel identification of new genes in Saccharomyces cerevisiae.</title>
        <authorList>
            <person name="Oshiro G."/>
            <person name="Wodicka L.M."/>
            <person name="Washburn M.P."/>
            <person name="Yates J.R. III"/>
            <person name="Lockhart D.J."/>
            <person name="Winzeler E.A."/>
        </authorList>
    </citation>
    <scope>IDENTIFICATION BY MASS SPECTROMETRY</scope>
</reference>
<gene>
    <name type="ordered locus">YKL100W-A</name>
</gene>
<proteinExistence type="evidence at protein level"/>
<organism>
    <name type="scientific">Saccharomyces cerevisiae (strain ATCC 204508 / S288c)</name>
    <name type="common">Baker's yeast</name>
    <dbReference type="NCBI Taxonomy" id="559292"/>
    <lineage>
        <taxon>Eukaryota</taxon>
        <taxon>Fungi</taxon>
        <taxon>Dikarya</taxon>
        <taxon>Ascomycota</taxon>
        <taxon>Saccharomycotina</taxon>
        <taxon>Saccharomycetes</taxon>
        <taxon>Saccharomycetales</taxon>
        <taxon>Saccharomycetaceae</taxon>
        <taxon>Saccharomyces</taxon>
    </lineage>
</organism>
<keyword id="KW-1185">Reference proteome</keyword>
<name>YK100_YEAST</name>